<name>KTHY_THEMA</name>
<comment type="function">
    <text evidence="1">Phosphorylation of dTMP to form dTDP in both de novo and salvage pathways of dTTP synthesis.</text>
</comment>
<comment type="catalytic activity">
    <reaction>
        <text>dTMP + ATP = dTDP + ADP</text>
        <dbReference type="Rhea" id="RHEA:13517"/>
        <dbReference type="ChEBI" id="CHEBI:30616"/>
        <dbReference type="ChEBI" id="CHEBI:58369"/>
        <dbReference type="ChEBI" id="CHEBI:63528"/>
        <dbReference type="ChEBI" id="CHEBI:456216"/>
        <dbReference type="EC" id="2.7.4.9"/>
    </reaction>
</comment>
<comment type="similarity">
    <text evidence="3">Belongs to the thymidylate kinase family.</text>
</comment>
<reference key="1">
    <citation type="journal article" date="1999" name="Nature">
        <title>Evidence for lateral gene transfer between Archaea and Bacteria from genome sequence of Thermotoga maritima.</title>
        <authorList>
            <person name="Nelson K.E."/>
            <person name="Clayton R.A."/>
            <person name="Gill S.R."/>
            <person name="Gwinn M.L."/>
            <person name="Dodson R.J."/>
            <person name="Haft D.H."/>
            <person name="Hickey E.K."/>
            <person name="Peterson J.D."/>
            <person name="Nelson W.C."/>
            <person name="Ketchum K.A."/>
            <person name="McDonald L.A."/>
            <person name="Utterback T.R."/>
            <person name="Malek J.A."/>
            <person name="Linher K.D."/>
            <person name="Garrett M.M."/>
            <person name="Stewart A.M."/>
            <person name="Cotton M.D."/>
            <person name="Pratt M.S."/>
            <person name="Phillips C.A."/>
            <person name="Richardson D.L."/>
            <person name="Heidelberg J.F."/>
            <person name="Sutton G.G."/>
            <person name="Fleischmann R.D."/>
            <person name="Eisen J.A."/>
            <person name="White O."/>
            <person name="Salzberg S.L."/>
            <person name="Smith H.O."/>
            <person name="Venter J.C."/>
            <person name="Fraser C.M."/>
        </authorList>
    </citation>
    <scope>NUCLEOTIDE SEQUENCE [LARGE SCALE GENOMIC DNA]</scope>
    <source>
        <strain>ATCC 43589 / DSM 3109 / JCM 10099 / NBRC 100826 / MSB8</strain>
    </source>
</reference>
<keyword id="KW-0002">3D-structure</keyword>
<keyword id="KW-0067">ATP-binding</keyword>
<keyword id="KW-0418">Kinase</keyword>
<keyword id="KW-0545">Nucleotide biosynthesis</keyword>
<keyword id="KW-0547">Nucleotide-binding</keyword>
<keyword id="KW-1185">Reference proteome</keyword>
<keyword id="KW-0808">Transferase</keyword>
<feature type="chain" id="PRO_0000155359" description="Thymidylate kinase">
    <location>
        <begin position="1"/>
        <end position="197"/>
    </location>
</feature>
<feature type="binding site" evidence="2">
    <location>
        <begin position="7"/>
        <end position="14"/>
    </location>
    <ligand>
        <name>ATP</name>
        <dbReference type="ChEBI" id="CHEBI:30616"/>
    </ligand>
</feature>
<feature type="strand" evidence="4">
    <location>
        <begin position="2"/>
        <end position="6"/>
    </location>
</feature>
<feature type="helix" evidence="4">
    <location>
        <begin position="13"/>
        <end position="26"/>
    </location>
</feature>
<feature type="strand" evidence="4">
    <location>
        <begin position="31"/>
        <end position="37"/>
    </location>
</feature>
<feature type="helix" evidence="4">
    <location>
        <begin position="41"/>
        <end position="52"/>
    </location>
</feature>
<feature type="helix" evidence="4">
    <location>
        <begin position="57"/>
        <end position="79"/>
    </location>
</feature>
<feature type="turn" evidence="4">
    <location>
        <begin position="80"/>
        <end position="82"/>
    </location>
</feature>
<feature type="strand" evidence="4">
    <location>
        <begin position="84"/>
        <end position="89"/>
    </location>
</feature>
<feature type="helix" evidence="4">
    <location>
        <begin position="91"/>
        <end position="98"/>
    </location>
</feature>
<feature type="turn" evidence="4">
    <location>
        <begin position="99"/>
        <end position="102"/>
    </location>
</feature>
<feature type="helix" evidence="4">
    <location>
        <begin position="106"/>
        <end position="117"/>
    </location>
</feature>
<feature type="strand" evidence="4">
    <location>
        <begin position="123"/>
        <end position="129"/>
    </location>
</feature>
<feature type="helix" evidence="4">
    <location>
        <begin position="132"/>
        <end position="138"/>
    </location>
</feature>
<feature type="helix" evidence="4">
    <location>
        <begin position="148"/>
        <end position="164"/>
    </location>
</feature>
<feature type="turn" evidence="4">
    <location>
        <begin position="166"/>
        <end position="168"/>
    </location>
</feature>
<feature type="strand" evidence="4">
    <location>
        <begin position="169"/>
        <end position="173"/>
    </location>
</feature>
<feature type="helix" evidence="4">
    <location>
        <begin position="178"/>
        <end position="189"/>
    </location>
</feature>
<dbReference type="EC" id="2.7.4.9"/>
<dbReference type="EMBL" id="AE000512">
    <property type="protein sequence ID" value="AAD36175.1"/>
    <property type="molecule type" value="Genomic_DNA"/>
</dbReference>
<dbReference type="PIR" id="E72294">
    <property type="entry name" value="E72294"/>
</dbReference>
<dbReference type="RefSeq" id="NP_228905.1">
    <property type="nucleotide sequence ID" value="NC_000853.1"/>
</dbReference>
<dbReference type="RefSeq" id="WP_004080341.1">
    <property type="nucleotide sequence ID" value="NZ_CP011107.1"/>
</dbReference>
<dbReference type="PDB" id="3HJN">
    <property type="method" value="X-ray"/>
    <property type="resolution" value="2.10 A"/>
    <property type="chains" value="A/B=1-197"/>
</dbReference>
<dbReference type="PDBsum" id="3HJN"/>
<dbReference type="SMR" id="Q9X0I3"/>
<dbReference type="FunCoup" id="Q9X0I3">
    <property type="interactions" value="264"/>
</dbReference>
<dbReference type="STRING" id="243274.TM_1099"/>
<dbReference type="PaxDb" id="243274-THEMA_08850"/>
<dbReference type="EnsemblBacteria" id="AAD36175">
    <property type="protein sequence ID" value="AAD36175"/>
    <property type="gene ID" value="TM_1099"/>
</dbReference>
<dbReference type="KEGG" id="tma:TM1099"/>
<dbReference type="KEGG" id="tmi:THEMA_08850"/>
<dbReference type="KEGG" id="tmm:Tmari_1105"/>
<dbReference type="KEGG" id="tmw:THMA_1122"/>
<dbReference type="eggNOG" id="COG0125">
    <property type="taxonomic scope" value="Bacteria"/>
</dbReference>
<dbReference type="InParanoid" id="Q9X0I3"/>
<dbReference type="OrthoDB" id="9774907at2"/>
<dbReference type="EvolutionaryTrace" id="Q9X0I3"/>
<dbReference type="Proteomes" id="UP000008183">
    <property type="component" value="Chromosome"/>
</dbReference>
<dbReference type="GO" id="GO:0005737">
    <property type="term" value="C:cytoplasm"/>
    <property type="evidence" value="ECO:0000318"/>
    <property type="project" value="GO_Central"/>
</dbReference>
<dbReference type="GO" id="GO:0005829">
    <property type="term" value="C:cytosol"/>
    <property type="evidence" value="ECO:0000318"/>
    <property type="project" value="GO_Central"/>
</dbReference>
<dbReference type="GO" id="GO:0005524">
    <property type="term" value="F:ATP binding"/>
    <property type="evidence" value="ECO:0007669"/>
    <property type="project" value="UniProtKB-UniRule"/>
</dbReference>
<dbReference type="GO" id="GO:0004798">
    <property type="term" value="F:dTMP kinase activity"/>
    <property type="evidence" value="ECO:0000318"/>
    <property type="project" value="GO_Central"/>
</dbReference>
<dbReference type="GO" id="GO:0006233">
    <property type="term" value="P:dTDP biosynthetic process"/>
    <property type="evidence" value="ECO:0000318"/>
    <property type="project" value="GO_Central"/>
</dbReference>
<dbReference type="GO" id="GO:0006235">
    <property type="term" value="P:dTTP biosynthetic process"/>
    <property type="evidence" value="ECO:0000318"/>
    <property type="project" value="GO_Central"/>
</dbReference>
<dbReference type="GO" id="GO:0006227">
    <property type="term" value="P:dUDP biosynthetic process"/>
    <property type="evidence" value="ECO:0000318"/>
    <property type="project" value="GO_Central"/>
</dbReference>
<dbReference type="CDD" id="cd01672">
    <property type="entry name" value="TMPK"/>
    <property type="match status" value="1"/>
</dbReference>
<dbReference type="FunFam" id="3.40.50.300:FF:000225">
    <property type="entry name" value="Thymidylate kinase"/>
    <property type="match status" value="1"/>
</dbReference>
<dbReference type="Gene3D" id="3.40.50.300">
    <property type="entry name" value="P-loop containing nucleotide triphosphate hydrolases"/>
    <property type="match status" value="1"/>
</dbReference>
<dbReference type="HAMAP" id="MF_00165">
    <property type="entry name" value="Thymidylate_kinase"/>
    <property type="match status" value="1"/>
</dbReference>
<dbReference type="InterPro" id="IPR027417">
    <property type="entry name" value="P-loop_NTPase"/>
</dbReference>
<dbReference type="InterPro" id="IPR039430">
    <property type="entry name" value="Thymidylate_kin-like_dom"/>
</dbReference>
<dbReference type="InterPro" id="IPR018095">
    <property type="entry name" value="Thymidylate_kin_CS"/>
</dbReference>
<dbReference type="InterPro" id="IPR018094">
    <property type="entry name" value="Thymidylate_kinase"/>
</dbReference>
<dbReference type="NCBIfam" id="TIGR00041">
    <property type="entry name" value="DTMP_kinase"/>
    <property type="match status" value="1"/>
</dbReference>
<dbReference type="PANTHER" id="PTHR10344">
    <property type="entry name" value="THYMIDYLATE KINASE"/>
    <property type="match status" value="1"/>
</dbReference>
<dbReference type="PANTHER" id="PTHR10344:SF4">
    <property type="entry name" value="UMP-CMP KINASE 2, MITOCHONDRIAL"/>
    <property type="match status" value="1"/>
</dbReference>
<dbReference type="Pfam" id="PF02223">
    <property type="entry name" value="Thymidylate_kin"/>
    <property type="match status" value="1"/>
</dbReference>
<dbReference type="SUPFAM" id="SSF52540">
    <property type="entry name" value="P-loop containing nucleoside triphosphate hydrolases"/>
    <property type="match status" value="1"/>
</dbReference>
<dbReference type="PROSITE" id="PS01331">
    <property type="entry name" value="THYMIDYLATE_KINASE"/>
    <property type="match status" value="1"/>
</dbReference>
<evidence type="ECO:0000250" key="1"/>
<evidence type="ECO:0000255" key="2"/>
<evidence type="ECO:0000305" key="3"/>
<evidence type="ECO:0007829" key="4">
    <source>
        <dbReference type="PDB" id="3HJN"/>
    </source>
</evidence>
<accession>Q9X0I3</accession>
<protein>
    <recommendedName>
        <fullName>Thymidylate kinase</fullName>
        <ecNumber>2.7.4.9</ecNumber>
    </recommendedName>
    <alternativeName>
        <fullName>dTMP kinase</fullName>
    </alternativeName>
</protein>
<gene>
    <name type="primary">tmk</name>
    <name type="ordered locus">TM_1099</name>
</gene>
<sequence>MFITFEGIDGSGKSTQIQLLAQYLEKRGKKVILKREPGGTETGEKIRKILLEEEVTPKAELFLFLASRNLLVTEIKQYLSEGYAVLLDRYTDSSVAYQGFGRNLGKEIVEELNDFATDGLIPDLTFYIDVDVETALKRKGELNRFEKREFLERVREGYLVLAREHPERIVVLDGKRSIEEIHRDVVREVKRRWKLDV</sequence>
<proteinExistence type="evidence at protein level"/>
<organism>
    <name type="scientific">Thermotoga maritima (strain ATCC 43589 / DSM 3109 / JCM 10099 / NBRC 100826 / MSB8)</name>
    <dbReference type="NCBI Taxonomy" id="243274"/>
    <lineage>
        <taxon>Bacteria</taxon>
        <taxon>Thermotogati</taxon>
        <taxon>Thermotogota</taxon>
        <taxon>Thermotogae</taxon>
        <taxon>Thermotogales</taxon>
        <taxon>Thermotogaceae</taxon>
        <taxon>Thermotoga</taxon>
    </lineage>
</organism>